<organism>
    <name type="scientific">Dechloromonas aromatica (strain RCB)</name>
    <dbReference type="NCBI Taxonomy" id="159087"/>
    <lineage>
        <taxon>Bacteria</taxon>
        <taxon>Pseudomonadati</taxon>
        <taxon>Pseudomonadota</taxon>
        <taxon>Betaproteobacteria</taxon>
        <taxon>Rhodocyclales</taxon>
        <taxon>Azonexaceae</taxon>
        <taxon>Dechloromonas</taxon>
    </lineage>
</organism>
<feature type="chain" id="PRO_0000263917" description="Argininosuccinate synthase">
    <location>
        <begin position="1"/>
        <end position="468"/>
    </location>
</feature>
<feature type="region of interest" description="Disordered" evidence="2">
    <location>
        <begin position="445"/>
        <end position="468"/>
    </location>
</feature>
<feature type="compositionally biased region" description="Low complexity" evidence="2">
    <location>
        <begin position="445"/>
        <end position="457"/>
    </location>
</feature>
<feature type="compositionally biased region" description="Basic residues" evidence="2">
    <location>
        <begin position="458"/>
        <end position="468"/>
    </location>
</feature>
<feature type="binding site" evidence="1">
    <location>
        <begin position="10"/>
        <end position="18"/>
    </location>
    <ligand>
        <name>ATP</name>
        <dbReference type="ChEBI" id="CHEBI:30616"/>
    </ligand>
</feature>
<feature type="binding site" evidence="1">
    <location>
        <position position="37"/>
    </location>
    <ligand>
        <name>ATP</name>
        <dbReference type="ChEBI" id="CHEBI:30616"/>
    </ligand>
</feature>
<feature type="binding site" evidence="1">
    <location>
        <position position="90"/>
    </location>
    <ligand>
        <name>L-citrulline</name>
        <dbReference type="ChEBI" id="CHEBI:57743"/>
    </ligand>
</feature>
<feature type="binding site" evidence="1">
    <location>
        <position position="95"/>
    </location>
    <ligand>
        <name>L-citrulline</name>
        <dbReference type="ChEBI" id="CHEBI:57743"/>
    </ligand>
</feature>
<feature type="binding site" evidence="1">
    <location>
        <position position="120"/>
    </location>
    <ligand>
        <name>ATP</name>
        <dbReference type="ChEBI" id="CHEBI:30616"/>
    </ligand>
</feature>
<feature type="binding site" evidence="1">
    <location>
        <position position="122"/>
    </location>
    <ligand>
        <name>L-aspartate</name>
        <dbReference type="ChEBI" id="CHEBI:29991"/>
    </ligand>
</feature>
<feature type="binding site" evidence="1">
    <location>
        <position position="126"/>
    </location>
    <ligand>
        <name>L-aspartate</name>
        <dbReference type="ChEBI" id="CHEBI:29991"/>
    </ligand>
</feature>
<feature type="binding site" evidence="1">
    <location>
        <position position="126"/>
    </location>
    <ligand>
        <name>L-citrulline</name>
        <dbReference type="ChEBI" id="CHEBI:57743"/>
    </ligand>
</feature>
<feature type="binding site" evidence="1">
    <location>
        <position position="127"/>
    </location>
    <ligand>
        <name>L-aspartate</name>
        <dbReference type="ChEBI" id="CHEBI:29991"/>
    </ligand>
</feature>
<feature type="binding site" evidence="1">
    <location>
        <position position="130"/>
    </location>
    <ligand>
        <name>L-citrulline</name>
        <dbReference type="ChEBI" id="CHEBI:57743"/>
    </ligand>
</feature>
<feature type="binding site" evidence="1">
    <location>
        <position position="182"/>
    </location>
    <ligand>
        <name>L-citrulline</name>
        <dbReference type="ChEBI" id="CHEBI:57743"/>
    </ligand>
</feature>
<feature type="binding site" evidence="1">
    <location>
        <position position="191"/>
    </location>
    <ligand>
        <name>L-citrulline</name>
        <dbReference type="ChEBI" id="CHEBI:57743"/>
    </ligand>
</feature>
<feature type="binding site" evidence="1">
    <location>
        <position position="267"/>
    </location>
    <ligand>
        <name>L-citrulline</name>
        <dbReference type="ChEBI" id="CHEBI:57743"/>
    </ligand>
</feature>
<feature type="binding site" evidence="1">
    <location>
        <position position="279"/>
    </location>
    <ligand>
        <name>L-citrulline</name>
        <dbReference type="ChEBI" id="CHEBI:57743"/>
    </ligand>
</feature>
<gene>
    <name evidence="1" type="primary">argG</name>
    <name type="ordered locus">Daro_3031</name>
</gene>
<reference key="1">
    <citation type="journal article" date="2009" name="BMC Genomics">
        <title>Metabolic analysis of the soil microbe Dechloromonas aromatica str. RCB: indications of a surprisingly complex life-style and cryptic anaerobic pathways for aromatic degradation.</title>
        <authorList>
            <person name="Salinero K.K."/>
            <person name="Keller K."/>
            <person name="Feil W.S."/>
            <person name="Feil H."/>
            <person name="Trong S."/>
            <person name="Di Bartolo G."/>
            <person name="Lapidus A."/>
        </authorList>
    </citation>
    <scope>NUCLEOTIDE SEQUENCE [LARGE SCALE GENOMIC DNA]</scope>
    <source>
        <strain>RCB</strain>
    </source>
</reference>
<accession>Q47BM0</accession>
<name>ASSY_DECAR</name>
<keyword id="KW-0028">Amino-acid biosynthesis</keyword>
<keyword id="KW-0055">Arginine biosynthesis</keyword>
<keyword id="KW-0067">ATP-binding</keyword>
<keyword id="KW-0963">Cytoplasm</keyword>
<keyword id="KW-0436">Ligase</keyword>
<keyword id="KW-0547">Nucleotide-binding</keyword>
<comment type="catalytic activity">
    <reaction evidence="1">
        <text>L-citrulline + L-aspartate + ATP = 2-(N(omega)-L-arginino)succinate + AMP + diphosphate + H(+)</text>
        <dbReference type="Rhea" id="RHEA:10932"/>
        <dbReference type="ChEBI" id="CHEBI:15378"/>
        <dbReference type="ChEBI" id="CHEBI:29991"/>
        <dbReference type="ChEBI" id="CHEBI:30616"/>
        <dbReference type="ChEBI" id="CHEBI:33019"/>
        <dbReference type="ChEBI" id="CHEBI:57472"/>
        <dbReference type="ChEBI" id="CHEBI:57743"/>
        <dbReference type="ChEBI" id="CHEBI:456215"/>
        <dbReference type="EC" id="6.3.4.5"/>
    </reaction>
</comment>
<comment type="pathway">
    <text evidence="1">Amino-acid biosynthesis; L-arginine biosynthesis; L-arginine from L-ornithine and carbamoyl phosphate: step 2/3.</text>
</comment>
<comment type="subunit">
    <text evidence="1">Homotetramer.</text>
</comment>
<comment type="subcellular location">
    <subcellularLocation>
        <location evidence="1">Cytoplasm</location>
    </subcellularLocation>
</comment>
<comment type="similarity">
    <text evidence="1">Belongs to the argininosuccinate synthase family. Type 1 subfamily.</text>
</comment>
<evidence type="ECO:0000255" key="1">
    <source>
        <dbReference type="HAMAP-Rule" id="MF_00005"/>
    </source>
</evidence>
<evidence type="ECO:0000256" key="2">
    <source>
        <dbReference type="SAM" id="MobiDB-lite"/>
    </source>
</evidence>
<sequence length="468" mass="51485">MSDIKKVVLAYSGGLDTSVILKWLQDVYKCEVVTFTADLGQGEELEPARAKALKAGIKPKNIYIDDVREEFVRDFVFPMFRANTVYEGEYLLGTSIARPLIAKRLIEIVNETGADAICHGATGKGNDQVRFELGAYALKPGIKVIAPWREWDLMSREKLMAYAEKHGIEIDMKHKKGGSPYSMDANLLHISYEGRHLEDPAAEAEESMWRWTVSPEKAPNKAEYLDLEFAKGDVVAVNGKKLKAHEVLALLNELGGKHGIGRLDLVENRYVGMKSRGCYETPGGTILLRAHRAIESVTLDREVAHLKDDLMPRYASLVYNGYWWSPERKALQVLIDHTQQTVNGVVRLKLYKGNVIVVGRDSKTDSLFDSTIATFEDDAGAYDQRDAGGFIKLNALRLRIAANLAGRKAGKPVAKKAAAKPVTKAVPKAVAKPVTKAVAKAAEKPVAAKATAKPVKAPVKKPIAKKKG</sequence>
<dbReference type="EC" id="6.3.4.5" evidence="1"/>
<dbReference type="EMBL" id="CP000089">
    <property type="protein sequence ID" value="AAZ47761.1"/>
    <property type="molecule type" value="Genomic_DNA"/>
</dbReference>
<dbReference type="SMR" id="Q47BM0"/>
<dbReference type="STRING" id="159087.Daro_3031"/>
<dbReference type="KEGG" id="dar:Daro_3031"/>
<dbReference type="eggNOG" id="COG0137">
    <property type="taxonomic scope" value="Bacteria"/>
</dbReference>
<dbReference type="HOGENOM" id="CLU_032784_4_2_4"/>
<dbReference type="OrthoDB" id="9801641at2"/>
<dbReference type="UniPathway" id="UPA00068">
    <property type="reaction ID" value="UER00113"/>
</dbReference>
<dbReference type="GO" id="GO:0005737">
    <property type="term" value="C:cytoplasm"/>
    <property type="evidence" value="ECO:0007669"/>
    <property type="project" value="UniProtKB-SubCell"/>
</dbReference>
<dbReference type="GO" id="GO:0004055">
    <property type="term" value="F:argininosuccinate synthase activity"/>
    <property type="evidence" value="ECO:0007669"/>
    <property type="project" value="UniProtKB-UniRule"/>
</dbReference>
<dbReference type="GO" id="GO:0005524">
    <property type="term" value="F:ATP binding"/>
    <property type="evidence" value="ECO:0007669"/>
    <property type="project" value="UniProtKB-UniRule"/>
</dbReference>
<dbReference type="GO" id="GO:0000053">
    <property type="term" value="P:argininosuccinate metabolic process"/>
    <property type="evidence" value="ECO:0007669"/>
    <property type="project" value="TreeGrafter"/>
</dbReference>
<dbReference type="GO" id="GO:0006526">
    <property type="term" value="P:L-arginine biosynthetic process"/>
    <property type="evidence" value="ECO:0007669"/>
    <property type="project" value="UniProtKB-UniRule"/>
</dbReference>
<dbReference type="GO" id="GO:0000050">
    <property type="term" value="P:urea cycle"/>
    <property type="evidence" value="ECO:0007669"/>
    <property type="project" value="TreeGrafter"/>
</dbReference>
<dbReference type="CDD" id="cd01999">
    <property type="entry name" value="ASS"/>
    <property type="match status" value="1"/>
</dbReference>
<dbReference type="FunFam" id="3.40.50.620:FF:000019">
    <property type="entry name" value="Argininosuccinate synthase"/>
    <property type="match status" value="1"/>
</dbReference>
<dbReference type="FunFam" id="3.90.1260.10:FF:000007">
    <property type="entry name" value="Argininosuccinate synthase"/>
    <property type="match status" value="1"/>
</dbReference>
<dbReference type="Gene3D" id="3.90.1260.10">
    <property type="entry name" value="Argininosuccinate synthetase, chain A, domain 2"/>
    <property type="match status" value="1"/>
</dbReference>
<dbReference type="Gene3D" id="3.40.50.620">
    <property type="entry name" value="HUPs"/>
    <property type="match status" value="1"/>
</dbReference>
<dbReference type="Gene3D" id="1.20.5.470">
    <property type="entry name" value="Single helix bin"/>
    <property type="match status" value="1"/>
</dbReference>
<dbReference type="HAMAP" id="MF_00005">
    <property type="entry name" value="Arg_succ_synth_type1"/>
    <property type="match status" value="1"/>
</dbReference>
<dbReference type="InterPro" id="IPR048268">
    <property type="entry name" value="Arginosuc_syn_C"/>
</dbReference>
<dbReference type="InterPro" id="IPR048267">
    <property type="entry name" value="Arginosuc_syn_N"/>
</dbReference>
<dbReference type="InterPro" id="IPR001518">
    <property type="entry name" value="Arginosuc_synth"/>
</dbReference>
<dbReference type="InterPro" id="IPR018223">
    <property type="entry name" value="Arginosuc_synth_CS"/>
</dbReference>
<dbReference type="InterPro" id="IPR023434">
    <property type="entry name" value="Arginosuc_synth_type_1_subfam"/>
</dbReference>
<dbReference type="InterPro" id="IPR024074">
    <property type="entry name" value="AS_cat/multimer_dom_body"/>
</dbReference>
<dbReference type="InterPro" id="IPR014729">
    <property type="entry name" value="Rossmann-like_a/b/a_fold"/>
</dbReference>
<dbReference type="NCBIfam" id="TIGR00032">
    <property type="entry name" value="argG"/>
    <property type="match status" value="1"/>
</dbReference>
<dbReference type="NCBIfam" id="NF001770">
    <property type="entry name" value="PRK00509.1"/>
    <property type="match status" value="1"/>
</dbReference>
<dbReference type="PANTHER" id="PTHR11587">
    <property type="entry name" value="ARGININOSUCCINATE SYNTHASE"/>
    <property type="match status" value="1"/>
</dbReference>
<dbReference type="PANTHER" id="PTHR11587:SF2">
    <property type="entry name" value="ARGININOSUCCINATE SYNTHASE"/>
    <property type="match status" value="1"/>
</dbReference>
<dbReference type="Pfam" id="PF20979">
    <property type="entry name" value="Arginosuc_syn_C"/>
    <property type="match status" value="1"/>
</dbReference>
<dbReference type="Pfam" id="PF00764">
    <property type="entry name" value="Arginosuc_synth"/>
    <property type="match status" value="1"/>
</dbReference>
<dbReference type="SUPFAM" id="SSF52402">
    <property type="entry name" value="Adenine nucleotide alpha hydrolases-like"/>
    <property type="match status" value="1"/>
</dbReference>
<dbReference type="SUPFAM" id="SSF69864">
    <property type="entry name" value="Argininosuccinate synthetase, C-terminal domain"/>
    <property type="match status" value="1"/>
</dbReference>
<dbReference type="PROSITE" id="PS00564">
    <property type="entry name" value="ARGININOSUCCIN_SYN_1"/>
    <property type="match status" value="1"/>
</dbReference>
<dbReference type="PROSITE" id="PS00565">
    <property type="entry name" value="ARGININOSUCCIN_SYN_2"/>
    <property type="match status" value="1"/>
</dbReference>
<protein>
    <recommendedName>
        <fullName evidence="1">Argininosuccinate synthase</fullName>
        <ecNumber evidence="1">6.3.4.5</ecNumber>
    </recommendedName>
    <alternativeName>
        <fullName evidence="1">Citrulline--aspartate ligase</fullName>
    </alternativeName>
</protein>
<proteinExistence type="inferred from homology"/>